<name>RS7_SHIBS</name>
<proteinExistence type="inferred from homology"/>
<gene>
    <name evidence="1" type="primary">rpsG</name>
    <name type="ordered locus">SBO_3322</name>
</gene>
<organism>
    <name type="scientific">Shigella boydii serotype 4 (strain Sb227)</name>
    <dbReference type="NCBI Taxonomy" id="300268"/>
    <lineage>
        <taxon>Bacteria</taxon>
        <taxon>Pseudomonadati</taxon>
        <taxon>Pseudomonadota</taxon>
        <taxon>Gammaproteobacteria</taxon>
        <taxon>Enterobacterales</taxon>
        <taxon>Enterobacteriaceae</taxon>
        <taxon>Shigella</taxon>
    </lineage>
</organism>
<sequence>MPRRRVIGQRKILPDPKFGSELLAKFVNILMVDGKKSTAESIVYSALETLAQRSGKSELEAFEVALENVRPTVEVKSRRVGGSTYQVPVEVRPVRRNALAMRWIVEAARKRGDKSMALRLANELSDAAENKGTAVKKREDVHRMAEANKAFAHYRW</sequence>
<protein>
    <recommendedName>
        <fullName evidence="1">Small ribosomal subunit protein uS7</fullName>
    </recommendedName>
    <alternativeName>
        <fullName evidence="2">30S ribosomal protein S7</fullName>
    </alternativeName>
</protein>
<evidence type="ECO:0000255" key="1">
    <source>
        <dbReference type="HAMAP-Rule" id="MF_00480"/>
    </source>
</evidence>
<evidence type="ECO:0000305" key="2"/>
<feature type="chain" id="PRO_0000226526" description="Small ribosomal subunit protein uS7">
    <location>
        <begin position="1"/>
        <end position="156"/>
    </location>
</feature>
<accession>Q31VU8</accession>
<keyword id="KW-0687">Ribonucleoprotein</keyword>
<keyword id="KW-0689">Ribosomal protein</keyword>
<keyword id="KW-0694">RNA-binding</keyword>
<keyword id="KW-0699">rRNA-binding</keyword>
<keyword id="KW-0820">tRNA-binding</keyword>
<dbReference type="EMBL" id="CP000036">
    <property type="protein sequence ID" value="ABB67810.1"/>
    <property type="molecule type" value="Genomic_DNA"/>
</dbReference>
<dbReference type="RefSeq" id="WP_001138043.1">
    <property type="nucleotide sequence ID" value="NC_007613.1"/>
</dbReference>
<dbReference type="SMR" id="Q31VU8"/>
<dbReference type="GeneID" id="93778657"/>
<dbReference type="KEGG" id="sbo:SBO_3322"/>
<dbReference type="HOGENOM" id="CLU_072226_1_1_6"/>
<dbReference type="Proteomes" id="UP000007067">
    <property type="component" value="Chromosome"/>
</dbReference>
<dbReference type="GO" id="GO:0015935">
    <property type="term" value="C:small ribosomal subunit"/>
    <property type="evidence" value="ECO:0007669"/>
    <property type="project" value="InterPro"/>
</dbReference>
<dbReference type="GO" id="GO:0019843">
    <property type="term" value="F:rRNA binding"/>
    <property type="evidence" value="ECO:0007669"/>
    <property type="project" value="UniProtKB-UniRule"/>
</dbReference>
<dbReference type="GO" id="GO:0003735">
    <property type="term" value="F:structural constituent of ribosome"/>
    <property type="evidence" value="ECO:0007669"/>
    <property type="project" value="InterPro"/>
</dbReference>
<dbReference type="GO" id="GO:0000049">
    <property type="term" value="F:tRNA binding"/>
    <property type="evidence" value="ECO:0007669"/>
    <property type="project" value="UniProtKB-UniRule"/>
</dbReference>
<dbReference type="GO" id="GO:0006412">
    <property type="term" value="P:translation"/>
    <property type="evidence" value="ECO:0007669"/>
    <property type="project" value="UniProtKB-UniRule"/>
</dbReference>
<dbReference type="CDD" id="cd14869">
    <property type="entry name" value="uS7_Bacteria"/>
    <property type="match status" value="1"/>
</dbReference>
<dbReference type="FunFam" id="1.10.455.10:FF:000001">
    <property type="entry name" value="30S ribosomal protein S7"/>
    <property type="match status" value="1"/>
</dbReference>
<dbReference type="Gene3D" id="1.10.455.10">
    <property type="entry name" value="Ribosomal protein S7 domain"/>
    <property type="match status" value="1"/>
</dbReference>
<dbReference type="HAMAP" id="MF_00480_B">
    <property type="entry name" value="Ribosomal_uS7_B"/>
    <property type="match status" value="1"/>
</dbReference>
<dbReference type="InterPro" id="IPR000235">
    <property type="entry name" value="Ribosomal_uS7"/>
</dbReference>
<dbReference type="InterPro" id="IPR005717">
    <property type="entry name" value="Ribosomal_uS7_bac/org-type"/>
</dbReference>
<dbReference type="InterPro" id="IPR020606">
    <property type="entry name" value="Ribosomal_uS7_CS"/>
</dbReference>
<dbReference type="InterPro" id="IPR023798">
    <property type="entry name" value="Ribosomal_uS7_dom"/>
</dbReference>
<dbReference type="InterPro" id="IPR036823">
    <property type="entry name" value="Ribosomal_uS7_dom_sf"/>
</dbReference>
<dbReference type="NCBIfam" id="TIGR01029">
    <property type="entry name" value="rpsG_bact"/>
    <property type="match status" value="1"/>
</dbReference>
<dbReference type="PANTHER" id="PTHR11205">
    <property type="entry name" value="RIBOSOMAL PROTEIN S7"/>
    <property type="match status" value="1"/>
</dbReference>
<dbReference type="Pfam" id="PF00177">
    <property type="entry name" value="Ribosomal_S7"/>
    <property type="match status" value="1"/>
</dbReference>
<dbReference type="PIRSF" id="PIRSF002122">
    <property type="entry name" value="RPS7p_RPS7a_RPS5e_RPS7o"/>
    <property type="match status" value="1"/>
</dbReference>
<dbReference type="SUPFAM" id="SSF47973">
    <property type="entry name" value="Ribosomal protein S7"/>
    <property type="match status" value="1"/>
</dbReference>
<dbReference type="PROSITE" id="PS00052">
    <property type="entry name" value="RIBOSOMAL_S7"/>
    <property type="match status" value="1"/>
</dbReference>
<reference key="1">
    <citation type="journal article" date="2005" name="Nucleic Acids Res.">
        <title>Genome dynamics and diversity of Shigella species, the etiologic agents of bacillary dysentery.</title>
        <authorList>
            <person name="Yang F."/>
            <person name="Yang J."/>
            <person name="Zhang X."/>
            <person name="Chen L."/>
            <person name="Jiang Y."/>
            <person name="Yan Y."/>
            <person name="Tang X."/>
            <person name="Wang J."/>
            <person name="Xiong Z."/>
            <person name="Dong J."/>
            <person name="Xue Y."/>
            <person name="Zhu Y."/>
            <person name="Xu X."/>
            <person name="Sun L."/>
            <person name="Chen S."/>
            <person name="Nie H."/>
            <person name="Peng J."/>
            <person name="Xu J."/>
            <person name="Wang Y."/>
            <person name="Yuan Z."/>
            <person name="Wen Y."/>
            <person name="Yao Z."/>
            <person name="Shen Y."/>
            <person name="Qiang B."/>
            <person name="Hou Y."/>
            <person name="Yu J."/>
            <person name="Jin Q."/>
        </authorList>
    </citation>
    <scope>NUCLEOTIDE SEQUENCE [LARGE SCALE GENOMIC DNA]</scope>
    <source>
        <strain>Sb227</strain>
    </source>
</reference>
<comment type="function">
    <text evidence="1">One of the primary rRNA binding proteins, it binds directly to 16S rRNA where it nucleates assembly of the head domain of the 30S subunit. Is located at the subunit interface close to the decoding center, probably blocks exit of the E-site tRNA.</text>
</comment>
<comment type="subunit">
    <text evidence="1">Part of the 30S ribosomal subunit. Contacts proteins S9 and S11.</text>
</comment>
<comment type="similarity">
    <text evidence="1">Belongs to the universal ribosomal protein uS7 family.</text>
</comment>